<proteinExistence type="inferred from homology"/>
<keyword id="KW-0414">Isoprene biosynthesis</keyword>
<keyword id="KW-0460">Magnesium</keyword>
<keyword id="KW-0479">Metal-binding</keyword>
<keyword id="KW-0784">Thiamine biosynthesis</keyword>
<keyword id="KW-0786">Thiamine pyrophosphate</keyword>
<keyword id="KW-0808">Transferase</keyword>
<accession>Q4UW29</accession>
<dbReference type="EC" id="2.2.1.7" evidence="1"/>
<dbReference type="EMBL" id="CP000050">
    <property type="protein sequence ID" value="AAY48744.1"/>
    <property type="status" value="ALT_INIT"/>
    <property type="molecule type" value="Genomic_DNA"/>
</dbReference>
<dbReference type="RefSeq" id="WP_011037575.1">
    <property type="nucleotide sequence ID" value="NZ_CP155948.1"/>
</dbReference>
<dbReference type="SMR" id="Q4UW29"/>
<dbReference type="KEGG" id="xcb:XC_1678"/>
<dbReference type="HOGENOM" id="CLU_009227_1_4_6"/>
<dbReference type="UniPathway" id="UPA00064">
    <property type="reaction ID" value="UER00091"/>
</dbReference>
<dbReference type="Proteomes" id="UP000000420">
    <property type="component" value="Chromosome"/>
</dbReference>
<dbReference type="GO" id="GO:0005829">
    <property type="term" value="C:cytosol"/>
    <property type="evidence" value="ECO:0007669"/>
    <property type="project" value="TreeGrafter"/>
</dbReference>
<dbReference type="GO" id="GO:0008661">
    <property type="term" value="F:1-deoxy-D-xylulose-5-phosphate synthase activity"/>
    <property type="evidence" value="ECO:0007669"/>
    <property type="project" value="UniProtKB-UniRule"/>
</dbReference>
<dbReference type="GO" id="GO:0000287">
    <property type="term" value="F:magnesium ion binding"/>
    <property type="evidence" value="ECO:0007669"/>
    <property type="project" value="UniProtKB-UniRule"/>
</dbReference>
<dbReference type="GO" id="GO:0030976">
    <property type="term" value="F:thiamine pyrophosphate binding"/>
    <property type="evidence" value="ECO:0007669"/>
    <property type="project" value="UniProtKB-UniRule"/>
</dbReference>
<dbReference type="GO" id="GO:0052865">
    <property type="term" value="P:1-deoxy-D-xylulose 5-phosphate biosynthetic process"/>
    <property type="evidence" value="ECO:0007669"/>
    <property type="project" value="UniProtKB-UniPathway"/>
</dbReference>
<dbReference type="GO" id="GO:0019288">
    <property type="term" value="P:isopentenyl diphosphate biosynthetic process, methylerythritol 4-phosphate pathway"/>
    <property type="evidence" value="ECO:0007669"/>
    <property type="project" value="TreeGrafter"/>
</dbReference>
<dbReference type="GO" id="GO:0016114">
    <property type="term" value="P:terpenoid biosynthetic process"/>
    <property type="evidence" value="ECO:0007669"/>
    <property type="project" value="UniProtKB-UniRule"/>
</dbReference>
<dbReference type="GO" id="GO:0009228">
    <property type="term" value="P:thiamine biosynthetic process"/>
    <property type="evidence" value="ECO:0007669"/>
    <property type="project" value="UniProtKB-UniRule"/>
</dbReference>
<dbReference type="CDD" id="cd02007">
    <property type="entry name" value="TPP_DXS"/>
    <property type="match status" value="1"/>
</dbReference>
<dbReference type="CDD" id="cd07033">
    <property type="entry name" value="TPP_PYR_DXS_TK_like"/>
    <property type="match status" value="1"/>
</dbReference>
<dbReference type="FunFam" id="3.40.50.920:FF:000002">
    <property type="entry name" value="1-deoxy-D-xylulose-5-phosphate synthase"/>
    <property type="match status" value="1"/>
</dbReference>
<dbReference type="FunFam" id="3.40.50.970:FF:000005">
    <property type="entry name" value="1-deoxy-D-xylulose-5-phosphate synthase"/>
    <property type="match status" value="1"/>
</dbReference>
<dbReference type="Gene3D" id="3.40.50.920">
    <property type="match status" value="1"/>
</dbReference>
<dbReference type="Gene3D" id="3.40.50.970">
    <property type="match status" value="2"/>
</dbReference>
<dbReference type="HAMAP" id="MF_00315">
    <property type="entry name" value="DXP_synth"/>
    <property type="match status" value="1"/>
</dbReference>
<dbReference type="InterPro" id="IPR005477">
    <property type="entry name" value="Dxylulose-5-P_synthase"/>
</dbReference>
<dbReference type="InterPro" id="IPR029061">
    <property type="entry name" value="THDP-binding"/>
</dbReference>
<dbReference type="InterPro" id="IPR009014">
    <property type="entry name" value="Transketo_C/PFOR_II"/>
</dbReference>
<dbReference type="InterPro" id="IPR005475">
    <property type="entry name" value="Transketolase-like_Pyr-bd"/>
</dbReference>
<dbReference type="InterPro" id="IPR020826">
    <property type="entry name" value="Transketolase_BS"/>
</dbReference>
<dbReference type="InterPro" id="IPR033248">
    <property type="entry name" value="Transketolase_C"/>
</dbReference>
<dbReference type="InterPro" id="IPR049557">
    <property type="entry name" value="Transketolase_CS"/>
</dbReference>
<dbReference type="NCBIfam" id="TIGR00204">
    <property type="entry name" value="dxs"/>
    <property type="match status" value="1"/>
</dbReference>
<dbReference type="NCBIfam" id="NF003933">
    <property type="entry name" value="PRK05444.2-2"/>
    <property type="match status" value="1"/>
</dbReference>
<dbReference type="PANTHER" id="PTHR43322">
    <property type="entry name" value="1-D-DEOXYXYLULOSE 5-PHOSPHATE SYNTHASE-RELATED"/>
    <property type="match status" value="1"/>
</dbReference>
<dbReference type="PANTHER" id="PTHR43322:SF5">
    <property type="entry name" value="1-DEOXY-D-XYLULOSE-5-PHOSPHATE SYNTHASE, CHLOROPLASTIC"/>
    <property type="match status" value="1"/>
</dbReference>
<dbReference type="Pfam" id="PF13292">
    <property type="entry name" value="DXP_synthase_N"/>
    <property type="match status" value="1"/>
</dbReference>
<dbReference type="Pfam" id="PF02779">
    <property type="entry name" value="Transket_pyr"/>
    <property type="match status" value="1"/>
</dbReference>
<dbReference type="Pfam" id="PF02780">
    <property type="entry name" value="Transketolase_C"/>
    <property type="match status" value="1"/>
</dbReference>
<dbReference type="SMART" id="SM00861">
    <property type="entry name" value="Transket_pyr"/>
    <property type="match status" value="1"/>
</dbReference>
<dbReference type="SUPFAM" id="SSF52518">
    <property type="entry name" value="Thiamin diphosphate-binding fold (THDP-binding)"/>
    <property type="match status" value="2"/>
</dbReference>
<dbReference type="SUPFAM" id="SSF52922">
    <property type="entry name" value="TK C-terminal domain-like"/>
    <property type="match status" value="1"/>
</dbReference>
<dbReference type="PROSITE" id="PS00801">
    <property type="entry name" value="TRANSKETOLASE_1"/>
    <property type="match status" value="1"/>
</dbReference>
<dbReference type="PROSITE" id="PS00802">
    <property type="entry name" value="TRANSKETOLASE_2"/>
    <property type="match status" value="1"/>
</dbReference>
<reference key="1">
    <citation type="journal article" date="2005" name="Genome Res.">
        <title>Comparative and functional genomic analyses of the pathogenicity of phytopathogen Xanthomonas campestris pv. campestris.</title>
        <authorList>
            <person name="Qian W."/>
            <person name="Jia Y."/>
            <person name="Ren S.-X."/>
            <person name="He Y.-Q."/>
            <person name="Feng J.-X."/>
            <person name="Lu L.-F."/>
            <person name="Sun Q."/>
            <person name="Ying G."/>
            <person name="Tang D.-J."/>
            <person name="Tang H."/>
            <person name="Wu W."/>
            <person name="Hao P."/>
            <person name="Wang L."/>
            <person name="Jiang B.-L."/>
            <person name="Zeng S."/>
            <person name="Gu W.-Y."/>
            <person name="Lu G."/>
            <person name="Rong L."/>
            <person name="Tian Y."/>
            <person name="Yao Z."/>
            <person name="Fu G."/>
            <person name="Chen B."/>
            <person name="Fang R."/>
            <person name="Qiang B."/>
            <person name="Chen Z."/>
            <person name="Zhao G.-P."/>
            <person name="Tang J.-L."/>
            <person name="He C."/>
        </authorList>
    </citation>
    <scope>NUCLEOTIDE SEQUENCE [LARGE SCALE GENOMIC DNA]</scope>
    <source>
        <strain>8004</strain>
    </source>
</reference>
<name>DXS_XANC8</name>
<comment type="function">
    <text evidence="1">Catalyzes the acyloin condensation reaction between C atoms 2 and 3 of pyruvate and glyceraldehyde 3-phosphate to yield 1-deoxy-D-xylulose-5-phosphate (DXP).</text>
</comment>
<comment type="catalytic activity">
    <reaction evidence="1">
        <text>D-glyceraldehyde 3-phosphate + pyruvate + H(+) = 1-deoxy-D-xylulose 5-phosphate + CO2</text>
        <dbReference type="Rhea" id="RHEA:12605"/>
        <dbReference type="ChEBI" id="CHEBI:15361"/>
        <dbReference type="ChEBI" id="CHEBI:15378"/>
        <dbReference type="ChEBI" id="CHEBI:16526"/>
        <dbReference type="ChEBI" id="CHEBI:57792"/>
        <dbReference type="ChEBI" id="CHEBI:59776"/>
        <dbReference type="EC" id="2.2.1.7"/>
    </reaction>
</comment>
<comment type="cofactor">
    <cofactor evidence="1">
        <name>Mg(2+)</name>
        <dbReference type="ChEBI" id="CHEBI:18420"/>
    </cofactor>
    <text evidence="1">Binds 1 Mg(2+) ion per subunit.</text>
</comment>
<comment type="cofactor">
    <cofactor evidence="1">
        <name>thiamine diphosphate</name>
        <dbReference type="ChEBI" id="CHEBI:58937"/>
    </cofactor>
    <text evidence="1">Binds 1 thiamine pyrophosphate per subunit.</text>
</comment>
<comment type="pathway">
    <text evidence="1">Metabolic intermediate biosynthesis; 1-deoxy-D-xylulose 5-phosphate biosynthesis; 1-deoxy-D-xylulose 5-phosphate from D-glyceraldehyde 3-phosphate and pyruvate: step 1/1.</text>
</comment>
<comment type="subunit">
    <text evidence="1">Homodimer.</text>
</comment>
<comment type="similarity">
    <text evidence="1">Belongs to the transketolase family. DXPS subfamily.</text>
</comment>
<comment type="sequence caution" evidence="2">
    <conflict type="erroneous initiation">
        <sequence resource="EMBL-CDS" id="AAY48744"/>
    </conflict>
</comment>
<organism>
    <name type="scientific">Xanthomonas campestris pv. campestris (strain 8004)</name>
    <dbReference type="NCBI Taxonomy" id="314565"/>
    <lineage>
        <taxon>Bacteria</taxon>
        <taxon>Pseudomonadati</taxon>
        <taxon>Pseudomonadota</taxon>
        <taxon>Gammaproteobacteria</taxon>
        <taxon>Lysobacterales</taxon>
        <taxon>Lysobacteraceae</taxon>
        <taxon>Xanthomonas</taxon>
    </lineage>
</organism>
<sequence length="638" mass="68395">MIDSTRYPRLSRIQTPDDLRTFEEADLTAVADELRAYLIESVGKSGGHFAAGLGVIELTVALHYLYQTPVDQLVWDVGHQTYPHKILTGRRDQIHTVKQKDGVAPFPKREESVYDTFGVGHSSTSISAALGMAIAAQRNGDDRKVVAVIGDGAMTAGMVYEALNHAGGMDPEPNLLVILNDNRMSISEAVGGLTKMLGRASGSRTLNAIREGGKKILGDKKNNPTARFVRRWEEHWKGMFVPSTLFEEMGFHYTGPIDGHDLPSLVGALKTLKTLKGPQLLHVITTKGKGYELAEGDQIGYHAVGPFDPSKGLVAKAGAKKPTYTDVFSDWVCDMAAADPKMLVITPAMREGSGLVRFSKEYPQRYFDVAIAEQHAVTLAAGMATQGAKPVVAIYSTFLQRGYDQLVHDVAVQKLDVLFAIDRGGVVGPDGATHAGNLDLSFLRCVPHMVVMAPADEAECRQMLTTGLRYEGPAAVRYPRGTGPGTALDAALTTLPIGKAQLRHSGARIALLGFGATVDAAEAVGRELGLTVVNMRFVKPLDKAMLLELAKCHEAFVSIEDNVVAGGAGSGVSELLNAEGVLMPMLHLGLPDSFQHHASREDLLAEAGIDQAGIRAAVLKRWPQLMAKGQQALNAAAG</sequence>
<protein>
    <recommendedName>
        <fullName evidence="1">1-deoxy-D-xylulose-5-phosphate synthase</fullName>
        <ecNumber evidence="1">2.2.1.7</ecNumber>
    </recommendedName>
    <alternativeName>
        <fullName evidence="1">1-deoxyxylulose-5-phosphate synthase</fullName>
        <shortName evidence="1">DXP synthase</shortName>
        <shortName evidence="1">DXPS</shortName>
    </alternativeName>
</protein>
<evidence type="ECO:0000255" key="1">
    <source>
        <dbReference type="HAMAP-Rule" id="MF_00315"/>
    </source>
</evidence>
<evidence type="ECO:0000305" key="2"/>
<feature type="chain" id="PRO_0000256504" description="1-deoxy-D-xylulose-5-phosphate synthase">
    <location>
        <begin position="1"/>
        <end position="638"/>
    </location>
</feature>
<feature type="binding site" evidence="1">
    <location>
        <position position="79"/>
    </location>
    <ligand>
        <name>thiamine diphosphate</name>
        <dbReference type="ChEBI" id="CHEBI:58937"/>
    </ligand>
</feature>
<feature type="binding site" evidence="1">
    <location>
        <begin position="120"/>
        <end position="122"/>
    </location>
    <ligand>
        <name>thiamine diphosphate</name>
        <dbReference type="ChEBI" id="CHEBI:58937"/>
    </ligand>
</feature>
<feature type="binding site" evidence="1">
    <location>
        <position position="151"/>
    </location>
    <ligand>
        <name>Mg(2+)</name>
        <dbReference type="ChEBI" id="CHEBI:18420"/>
    </ligand>
</feature>
<feature type="binding site" evidence="1">
    <location>
        <begin position="152"/>
        <end position="153"/>
    </location>
    <ligand>
        <name>thiamine diphosphate</name>
        <dbReference type="ChEBI" id="CHEBI:58937"/>
    </ligand>
</feature>
<feature type="binding site" evidence="1">
    <location>
        <position position="182"/>
    </location>
    <ligand>
        <name>Mg(2+)</name>
        <dbReference type="ChEBI" id="CHEBI:18420"/>
    </ligand>
</feature>
<feature type="binding site" evidence="1">
    <location>
        <position position="182"/>
    </location>
    <ligand>
        <name>thiamine diphosphate</name>
        <dbReference type="ChEBI" id="CHEBI:58937"/>
    </ligand>
</feature>
<feature type="binding site" evidence="1">
    <location>
        <position position="291"/>
    </location>
    <ligand>
        <name>thiamine diphosphate</name>
        <dbReference type="ChEBI" id="CHEBI:58937"/>
    </ligand>
</feature>
<feature type="binding site" evidence="1">
    <location>
        <position position="373"/>
    </location>
    <ligand>
        <name>thiamine diphosphate</name>
        <dbReference type="ChEBI" id="CHEBI:58937"/>
    </ligand>
</feature>
<gene>
    <name evidence="1" type="primary">dxs</name>
    <name type="ordered locus">XC_1678</name>
</gene>